<evidence type="ECO:0000255" key="1"/>
<evidence type="ECO:0000269" key="2">
    <source>
    </source>
</evidence>
<evidence type="ECO:0000269" key="3">
    <source>
    </source>
</evidence>
<evidence type="ECO:0000305" key="4"/>
<keyword id="KW-0067">ATP-binding</keyword>
<keyword id="KW-0115">cAMP biosynthesis</keyword>
<keyword id="KW-0178">Competence</keyword>
<keyword id="KW-0963">Cytoplasm</keyword>
<keyword id="KW-0456">Lyase</keyword>
<keyword id="KW-0547">Nucleotide-binding</keyword>
<keyword id="KW-1185">Reference proteome</keyword>
<sequence>MECNLAQAKQWVSALDQRRFERALQGSGDAFQHVLAIVPLLLHLNHPQLPGYVIHAPSGIASFLASDYQKKWLTNEYGIHYADHKPSTLKSAVNFHEVFPPILGVYVMGSFGSISQTSSSDLDTWICVRDGLSLDEYTLLTQKAKRISEWAMQFNVEINFYLMDQQRFRNEHYADPLTIENSGSAQYMLLLDEFYRSAVRLAGKPLLWLHLWVENEKDYEKEVARLITEGEIDPNDWVDFGGLGQFSANEYFGASLWHLYKGIDSPYKSVLKILLLEAYSKEYPNTCLIARTFKRDLLAGNTNPDHHFDPYIAILAKVTQYLTALSEFKRLDFVHRCFYVKATEDFARYQANNWRIRYMEILAQEWGWSAETVKHLNKRPFWKIKAVKENHDNIMKFLMLSYRNLVEFARKHHIHSSVVPQDINILSRKLYTAFEELPGKVSLLNTQISHNLSEAHLTFVEVRGNKHFKDGWYLINQPIHHIMFSKERVIEYGESLNKLVSWAYFNHLLTEKTELSIFSKNVTLSTLQRFVTNLRQSFPSTIAKQPKNSDLLNQCEIRSLFIAINLTTDPTSKVEEVLTGISSRDLFSFGSLEQSLVGSIDFTYRNVWNEIRTLHFEGQNAILLALKVLSNKIYRGVNRPDSIQVYCYSERYRQDLRQLVMGLVNRCVSIQVGDIQQPCQTSRLRVAGKNWQLFFEDRGISLQEIGNESVCNEAESAVDFDEVLQTPIEDGETNQESRRYPPEMDAFASEGFLQFFFEDNSDHSFNVYILDESNHLEIYRHCDGEKDEKVREINQLYQNAKQEGDKNPYNIVQHNFNYPQFYQLQNGKNGISIVPFKFRQMNK</sequence>
<organism>
    <name type="scientific">Haemophilus influenzae (strain ATCC 51907 / DSM 11121 / KW20 / Rd)</name>
    <dbReference type="NCBI Taxonomy" id="71421"/>
    <lineage>
        <taxon>Bacteria</taxon>
        <taxon>Pseudomonadati</taxon>
        <taxon>Pseudomonadota</taxon>
        <taxon>Gammaproteobacteria</taxon>
        <taxon>Pasteurellales</taxon>
        <taxon>Pasteurellaceae</taxon>
        <taxon>Haemophilus</taxon>
    </lineage>
</organism>
<dbReference type="EC" id="4.6.1.1"/>
<dbReference type="EMBL" id="L23824">
    <property type="protein sequence ID" value="AAC36855.1"/>
    <property type="molecule type" value="Unassigned_DNA"/>
</dbReference>
<dbReference type="EMBL" id="L42023">
    <property type="protein sequence ID" value="AAC22262.1"/>
    <property type="molecule type" value="Genomic_DNA"/>
</dbReference>
<dbReference type="PIR" id="A49922">
    <property type="entry name" value="A49922"/>
</dbReference>
<dbReference type="RefSeq" id="NP_438762.1">
    <property type="nucleotide sequence ID" value="NC_000907.1"/>
</dbReference>
<dbReference type="STRING" id="71421.HI_0604"/>
<dbReference type="EnsemblBacteria" id="AAC22262">
    <property type="protein sequence ID" value="AAC22262"/>
    <property type="gene ID" value="HI_0604"/>
</dbReference>
<dbReference type="KEGG" id="hin:HI_0604"/>
<dbReference type="PATRIC" id="fig|71421.8.peg.628"/>
<dbReference type="eggNOG" id="COG3072">
    <property type="taxonomic scope" value="Bacteria"/>
</dbReference>
<dbReference type="HOGENOM" id="CLU_013280_0_0_6"/>
<dbReference type="OrthoDB" id="5571448at2"/>
<dbReference type="PhylomeDB" id="P40134"/>
<dbReference type="BioCyc" id="HINF71421:G1GJ1-623-MONOMER"/>
<dbReference type="Proteomes" id="UP000000579">
    <property type="component" value="Chromosome"/>
</dbReference>
<dbReference type="GO" id="GO:0005737">
    <property type="term" value="C:cytoplasm"/>
    <property type="evidence" value="ECO:0007669"/>
    <property type="project" value="UniProtKB-SubCell"/>
</dbReference>
<dbReference type="GO" id="GO:0004016">
    <property type="term" value="F:adenylate cyclase activity"/>
    <property type="evidence" value="ECO:0000318"/>
    <property type="project" value="GO_Central"/>
</dbReference>
<dbReference type="GO" id="GO:0005524">
    <property type="term" value="F:ATP binding"/>
    <property type="evidence" value="ECO:0007669"/>
    <property type="project" value="UniProtKB-KW"/>
</dbReference>
<dbReference type="GO" id="GO:0006171">
    <property type="term" value="P:cAMP biosynthetic process"/>
    <property type="evidence" value="ECO:0007669"/>
    <property type="project" value="UniProtKB-KW"/>
</dbReference>
<dbReference type="GO" id="GO:0030420">
    <property type="term" value="P:establishment of competence for transformation"/>
    <property type="evidence" value="ECO:0007669"/>
    <property type="project" value="UniProtKB-KW"/>
</dbReference>
<dbReference type="InterPro" id="IPR000274">
    <property type="entry name" value="Adenylate_cyclase_1"/>
</dbReference>
<dbReference type="InterPro" id="IPR024686">
    <property type="entry name" value="Adenylate_cyclase_1_CS"/>
</dbReference>
<dbReference type="InterPro" id="IPR024685">
    <property type="entry name" value="Adenylate_cyclase_1_N"/>
</dbReference>
<dbReference type="NCBIfam" id="NF006978">
    <property type="entry name" value="PRK09450.1-2"/>
    <property type="match status" value="1"/>
</dbReference>
<dbReference type="PANTHER" id="PTHR38760">
    <property type="entry name" value="ADENYLATE CYCLASE"/>
    <property type="match status" value="1"/>
</dbReference>
<dbReference type="PANTHER" id="PTHR38760:SF1">
    <property type="entry name" value="ADENYLATE CYCLASE"/>
    <property type="match status" value="1"/>
</dbReference>
<dbReference type="Pfam" id="PF12633">
    <property type="entry name" value="Adenyl_cycl_N"/>
    <property type="match status" value="1"/>
</dbReference>
<dbReference type="Pfam" id="PF01295">
    <property type="entry name" value="Adenylate_cycl"/>
    <property type="match status" value="1"/>
</dbReference>
<dbReference type="PIRSF" id="PIRSF001444">
    <property type="entry name" value="Adenylate_cycl"/>
    <property type="match status" value="1"/>
</dbReference>
<dbReference type="PROSITE" id="PS01092">
    <property type="entry name" value="ADENYLATE_CYCLASE_1_1"/>
    <property type="match status" value="1"/>
</dbReference>
<dbReference type="PROSITE" id="PS01093">
    <property type="entry name" value="ADENYLATE_CYCLASE_1_2"/>
    <property type="match status" value="1"/>
</dbReference>
<comment type="function">
    <text>Plays an essential role in competence development.</text>
</comment>
<comment type="catalytic activity">
    <reaction>
        <text>ATP = 3',5'-cyclic AMP + diphosphate</text>
        <dbReference type="Rhea" id="RHEA:15389"/>
        <dbReference type="ChEBI" id="CHEBI:30616"/>
        <dbReference type="ChEBI" id="CHEBI:33019"/>
        <dbReference type="ChEBI" id="CHEBI:58165"/>
        <dbReference type="EC" id="4.6.1.1"/>
    </reaction>
</comment>
<comment type="subcellular location">
    <subcellularLocation>
        <location>Cytoplasm</location>
    </subcellularLocation>
</comment>
<comment type="induction">
    <text evidence="2">Expressed during exponential growth; expression decreases 10-fold on shifting to starvation media.</text>
</comment>
<comment type="disruption phenotype">
    <text evidence="3">Loss of competence, the ability to bind, take-up and integrate exogenous DNA. Loss of the ability to ferment ribose or xylose.</text>
</comment>
<comment type="similarity">
    <text evidence="4">Belongs to the adenylyl cyclase class-1 family.</text>
</comment>
<accession>P40134</accession>
<reference key="1">
    <citation type="journal article" date="1993" name="J. Bacteriol.">
        <title>The Haemophilus influenzae adenylate cyclase gene: cloning, sequence, and essential role in competence.</title>
        <authorList>
            <person name="Dorocicz I.R."/>
            <person name="Williams P.M."/>
            <person name="Redfield R.J."/>
        </authorList>
    </citation>
    <scope>NUCLEOTIDE SEQUENCE [GENOMIC DNA]</scope>
    <scope>DISRUPTION PHENOTYPE</scope>
    <source>
        <strain>ATCC 51907 / DSM 11121 / KW20 / Rd</strain>
    </source>
</reference>
<reference key="2">
    <citation type="journal article" date="1995" name="Science">
        <title>Whole-genome random sequencing and assembly of Haemophilus influenzae Rd.</title>
        <authorList>
            <person name="Fleischmann R.D."/>
            <person name="Adams M.D."/>
            <person name="White O."/>
            <person name="Clayton R.A."/>
            <person name="Kirkness E.F."/>
            <person name="Kerlavage A.R."/>
            <person name="Bult C.J."/>
            <person name="Tomb J.-F."/>
            <person name="Dougherty B.A."/>
            <person name="Merrick J.M."/>
            <person name="McKenney K."/>
            <person name="Sutton G.G."/>
            <person name="FitzHugh W."/>
            <person name="Fields C.A."/>
            <person name="Gocayne J.D."/>
            <person name="Scott J.D."/>
            <person name="Shirley R."/>
            <person name="Liu L.-I."/>
            <person name="Glodek A."/>
            <person name="Kelley J.M."/>
            <person name="Weidman J.F."/>
            <person name="Phillips C.A."/>
            <person name="Spriggs T."/>
            <person name="Hedblom E."/>
            <person name="Cotton M.D."/>
            <person name="Utterback T.R."/>
            <person name="Hanna M.C."/>
            <person name="Nguyen D.T."/>
            <person name="Saudek D.M."/>
            <person name="Brandon R.C."/>
            <person name="Fine L.D."/>
            <person name="Fritchman J.L."/>
            <person name="Fuhrmann J.L."/>
            <person name="Geoghagen N.S.M."/>
            <person name="Gnehm C.L."/>
            <person name="McDonald L.A."/>
            <person name="Small K.V."/>
            <person name="Fraser C.M."/>
            <person name="Smith H.O."/>
            <person name="Venter J.C."/>
        </authorList>
    </citation>
    <scope>NUCLEOTIDE SEQUENCE [LARGE SCALE GENOMIC DNA]</scope>
    <source>
        <strain>ATCC 51907 / DSM 11121 / KW20 / Rd</strain>
    </source>
</reference>
<reference key="3">
    <citation type="journal article" date="2005" name="J. Mol. Biol.">
        <title>A novel CRP-dependent regulon controls expression of competence genes in Haemophilus influenzae.</title>
        <authorList>
            <person name="Redfield R.J."/>
            <person name="Cameron A.D."/>
            <person name="Qian Q."/>
            <person name="Hinds J."/>
            <person name="Ali T.R."/>
            <person name="Kroll J.S."/>
            <person name="Langford P.R."/>
        </authorList>
    </citation>
    <scope>INDUCTION</scope>
    <source>
        <strain>ATCC 51907 / DSM 11121 / KW20 / Rd</strain>
    </source>
</reference>
<gene>
    <name type="primary">cyaA</name>
    <name type="synonym">cya</name>
    <name type="ordered locus">HI_0604</name>
</gene>
<name>CYAA_HAEIN</name>
<proteinExistence type="evidence at transcript level"/>
<feature type="chain" id="PRO_0000195676" description="Adenylate cyclase">
    <location>
        <begin position="1"/>
        <end position="843"/>
    </location>
</feature>
<feature type="region of interest" description="Catalytic" evidence="1">
    <location>
        <begin position="1"/>
        <end position="542"/>
    </location>
</feature>
<feature type="region of interest" description="Regulatory" evidence="1">
    <location>
        <begin position="549"/>
        <end position="843"/>
    </location>
</feature>
<protein>
    <recommendedName>
        <fullName>Adenylate cyclase</fullName>
        <ecNumber>4.6.1.1</ecNumber>
    </recommendedName>
    <alternativeName>
        <fullName>ATP pyrophosphate-lyase</fullName>
    </alternativeName>
    <alternativeName>
        <fullName>Adenylyl cyclase</fullName>
    </alternativeName>
</protein>